<reference key="1">
    <citation type="journal article" date="2006" name="Proc. Natl. Acad. Sci. U.S.A.">
        <title>Comparative genomics of the lactic acid bacteria.</title>
        <authorList>
            <person name="Makarova K.S."/>
            <person name="Slesarev A."/>
            <person name="Wolf Y.I."/>
            <person name="Sorokin A."/>
            <person name="Mirkin B."/>
            <person name="Koonin E.V."/>
            <person name="Pavlov A."/>
            <person name="Pavlova N."/>
            <person name="Karamychev V."/>
            <person name="Polouchine N."/>
            <person name="Shakhova V."/>
            <person name="Grigoriev I."/>
            <person name="Lou Y."/>
            <person name="Rohksar D."/>
            <person name="Lucas S."/>
            <person name="Huang K."/>
            <person name="Goodstein D.M."/>
            <person name="Hawkins T."/>
            <person name="Plengvidhya V."/>
            <person name="Welker D."/>
            <person name="Hughes J."/>
            <person name="Goh Y."/>
            <person name="Benson A."/>
            <person name="Baldwin K."/>
            <person name="Lee J.-H."/>
            <person name="Diaz-Muniz I."/>
            <person name="Dosti B."/>
            <person name="Smeianov V."/>
            <person name="Wechter W."/>
            <person name="Barabote R."/>
            <person name="Lorca G."/>
            <person name="Altermann E."/>
            <person name="Barrangou R."/>
            <person name="Ganesan B."/>
            <person name="Xie Y."/>
            <person name="Rawsthorne H."/>
            <person name="Tamir D."/>
            <person name="Parker C."/>
            <person name="Breidt F."/>
            <person name="Broadbent J.R."/>
            <person name="Hutkins R."/>
            <person name="O'Sullivan D."/>
            <person name="Steele J."/>
            <person name="Unlu G."/>
            <person name="Saier M.H. Jr."/>
            <person name="Klaenhammer T."/>
            <person name="Richardson P."/>
            <person name="Kozyavkin S."/>
            <person name="Weimer B.C."/>
            <person name="Mills D.A."/>
        </authorList>
    </citation>
    <scope>NUCLEOTIDE SEQUENCE [LARGE SCALE GENOMIC DNA]</scope>
    <source>
        <strain>ATCC BAA-365 / Lb-18</strain>
    </source>
</reference>
<evidence type="ECO:0000255" key="1">
    <source>
        <dbReference type="HAMAP-Rule" id="MF_00031"/>
    </source>
</evidence>
<proteinExistence type="inferred from homology"/>
<gene>
    <name evidence="1" type="primary">ruvA</name>
    <name type="ordered locus">LBUL_1493</name>
</gene>
<protein>
    <recommendedName>
        <fullName evidence="1">Holliday junction branch migration complex subunit RuvA</fullName>
    </recommendedName>
</protein>
<accession>Q048Y6</accession>
<feature type="chain" id="PRO_1000002470" description="Holliday junction branch migration complex subunit RuvA">
    <location>
        <begin position="1"/>
        <end position="197"/>
    </location>
</feature>
<feature type="region of interest" description="Domain I" evidence="1">
    <location>
        <begin position="1"/>
        <end position="61"/>
    </location>
</feature>
<feature type="region of interest" description="Domain II" evidence="1">
    <location>
        <begin position="62"/>
        <end position="140"/>
    </location>
</feature>
<feature type="region of interest" description="Flexible linker" evidence="1">
    <location>
        <begin position="141"/>
        <end position="150"/>
    </location>
</feature>
<feature type="region of interest" description="Domain III" evidence="1">
    <location>
        <begin position="150"/>
        <end position="197"/>
    </location>
</feature>
<name>RUVA_LACDB</name>
<keyword id="KW-0963">Cytoplasm</keyword>
<keyword id="KW-0227">DNA damage</keyword>
<keyword id="KW-0233">DNA recombination</keyword>
<keyword id="KW-0234">DNA repair</keyword>
<keyword id="KW-0238">DNA-binding</keyword>
<organism>
    <name type="scientific">Lactobacillus delbrueckii subsp. bulgaricus (strain ATCC BAA-365 / Lb-18)</name>
    <dbReference type="NCBI Taxonomy" id="321956"/>
    <lineage>
        <taxon>Bacteria</taxon>
        <taxon>Bacillati</taxon>
        <taxon>Bacillota</taxon>
        <taxon>Bacilli</taxon>
        <taxon>Lactobacillales</taxon>
        <taxon>Lactobacillaceae</taxon>
        <taxon>Lactobacillus</taxon>
    </lineage>
</organism>
<sequence>MYEYFEGTITVVNPAYVVIEVAGIGYRILTPTPYAYKEGDKARIYVEQVVRENGMTLYGFKSQQDKVLFNKLNEVSGIGPKSALAIMAAEDNGALASAIESGEVSYLTRFPGIGKKTASQIVLDLRGKMGNYVAENLFTEDEPVESVFPALEDALLALGALGYSQKEVDRIKPKLKKLPEMSADEYIKQGLGFLLKK</sequence>
<comment type="function">
    <text evidence="1">The RuvA-RuvB-RuvC complex processes Holliday junction (HJ) DNA during genetic recombination and DNA repair, while the RuvA-RuvB complex plays an important role in the rescue of blocked DNA replication forks via replication fork reversal (RFR). RuvA specifically binds to HJ cruciform DNA, conferring on it an open structure. The RuvB hexamer acts as an ATP-dependent pump, pulling dsDNA into and through the RuvAB complex. HJ branch migration allows RuvC to scan DNA until it finds its consensus sequence, where it cleaves and resolves the cruciform DNA.</text>
</comment>
<comment type="subunit">
    <text evidence="1">Homotetramer. Forms an RuvA(8)-RuvB(12)-Holliday junction (HJ) complex. HJ DNA is sandwiched between 2 RuvA tetramers; dsDNA enters through RuvA and exits via RuvB. An RuvB hexamer assembles on each DNA strand where it exits the tetramer. Each RuvB hexamer is contacted by two RuvA subunits (via domain III) on 2 adjacent RuvB subunits; this complex drives branch migration. In the full resolvosome a probable DNA-RuvA(4)-RuvB(12)-RuvC(2) complex forms which resolves the HJ.</text>
</comment>
<comment type="subcellular location">
    <subcellularLocation>
        <location evidence="1">Cytoplasm</location>
    </subcellularLocation>
</comment>
<comment type="domain">
    <text evidence="1">Has three domains with a flexible linker between the domains II and III and assumes an 'L' shape. Domain III is highly mobile and contacts RuvB.</text>
</comment>
<comment type="similarity">
    <text evidence="1">Belongs to the RuvA family.</text>
</comment>
<dbReference type="EMBL" id="CP000412">
    <property type="protein sequence ID" value="ABJ58986.1"/>
    <property type="molecule type" value="Genomic_DNA"/>
</dbReference>
<dbReference type="RefSeq" id="WP_003619553.1">
    <property type="nucleotide sequence ID" value="NC_008529.1"/>
</dbReference>
<dbReference type="SMR" id="Q048Y6"/>
<dbReference type="KEGG" id="lbu:LBUL_1493"/>
<dbReference type="HOGENOM" id="CLU_087936_1_0_9"/>
<dbReference type="BioCyc" id="LDEL321956:LBUL_RS07055-MONOMER"/>
<dbReference type="GO" id="GO:0005737">
    <property type="term" value="C:cytoplasm"/>
    <property type="evidence" value="ECO:0007669"/>
    <property type="project" value="UniProtKB-SubCell"/>
</dbReference>
<dbReference type="GO" id="GO:0009379">
    <property type="term" value="C:Holliday junction helicase complex"/>
    <property type="evidence" value="ECO:0007669"/>
    <property type="project" value="InterPro"/>
</dbReference>
<dbReference type="GO" id="GO:0048476">
    <property type="term" value="C:Holliday junction resolvase complex"/>
    <property type="evidence" value="ECO:0007669"/>
    <property type="project" value="UniProtKB-UniRule"/>
</dbReference>
<dbReference type="GO" id="GO:0005524">
    <property type="term" value="F:ATP binding"/>
    <property type="evidence" value="ECO:0007669"/>
    <property type="project" value="InterPro"/>
</dbReference>
<dbReference type="GO" id="GO:0000400">
    <property type="term" value="F:four-way junction DNA binding"/>
    <property type="evidence" value="ECO:0007669"/>
    <property type="project" value="UniProtKB-UniRule"/>
</dbReference>
<dbReference type="GO" id="GO:0009378">
    <property type="term" value="F:four-way junction helicase activity"/>
    <property type="evidence" value="ECO:0007669"/>
    <property type="project" value="InterPro"/>
</dbReference>
<dbReference type="GO" id="GO:0006310">
    <property type="term" value="P:DNA recombination"/>
    <property type="evidence" value="ECO:0007669"/>
    <property type="project" value="UniProtKB-UniRule"/>
</dbReference>
<dbReference type="GO" id="GO:0006281">
    <property type="term" value="P:DNA repair"/>
    <property type="evidence" value="ECO:0007669"/>
    <property type="project" value="UniProtKB-UniRule"/>
</dbReference>
<dbReference type="CDD" id="cd14332">
    <property type="entry name" value="UBA_RuvA_C"/>
    <property type="match status" value="1"/>
</dbReference>
<dbReference type="Gene3D" id="1.10.150.20">
    <property type="entry name" value="5' to 3' exonuclease, C-terminal subdomain"/>
    <property type="match status" value="1"/>
</dbReference>
<dbReference type="Gene3D" id="1.10.8.10">
    <property type="entry name" value="DNA helicase RuvA subunit, C-terminal domain"/>
    <property type="match status" value="1"/>
</dbReference>
<dbReference type="Gene3D" id="2.40.50.140">
    <property type="entry name" value="Nucleic acid-binding proteins"/>
    <property type="match status" value="1"/>
</dbReference>
<dbReference type="HAMAP" id="MF_00031">
    <property type="entry name" value="DNA_HJ_migration_RuvA"/>
    <property type="match status" value="1"/>
</dbReference>
<dbReference type="InterPro" id="IPR013849">
    <property type="entry name" value="DNA_helicase_Holl-junc_RuvA_I"/>
</dbReference>
<dbReference type="InterPro" id="IPR003583">
    <property type="entry name" value="Hlx-hairpin-Hlx_DNA-bd_motif"/>
</dbReference>
<dbReference type="InterPro" id="IPR012340">
    <property type="entry name" value="NA-bd_OB-fold"/>
</dbReference>
<dbReference type="InterPro" id="IPR000085">
    <property type="entry name" value="RuvA"/>
</dbReference>
<dbReference type="InterPro" id="IPR010994">
    <property type="entry name" value="RuvA_2-like"/>
</dbReference>
<dbReference type="InterPro" id="IPR011114">
    <property type="entry name" value="RuvA_C"/>
</dbReference>
<dbReference type="InterPro" id="IPR036267">
    <property type="entry name" value="RuvA_C_sf"/>
</dbReference>
<dbReference type="NCBIfam" id="TIGR00084">
    <property type="entry name" value="ruvA"/>
    <property type="match status" value="1"/>
</dbReference>
<dbReference type="Pfam" id="PF14520">
    <property type="entry name" value="HHH_5"/>
    <property type="match status" value="1"/>
</dbReference>
<dbReference type="Pfam" id="PF07499">
    <property type="entry name" value="RuvA_C"/>
    <property type="match status" value="1"/>
</dbReference>
<dbReference type="Pfam" id="PF01330">
    <property type="entry name" value="RuvA_N"/>
    <property type="match status" value="1"/>
</dbReference>
<dbReference type="SMART" id="SM00278">
    <property type="entry name" value="HhH1"/>
    <property type="match status" value="2"/>
</dbReference>
<dbReference type="SUPFAM" id="SSF46929">
    <property type="entry name" value="DNA helicase RuvA subunit, C-terminal domain"/>
    <property type="match status" value="1"/>
</dbReference>
<dbReference type="SUPFAM" id="SSF50249">
    <property type="entry name" value="Nucleic acid-binding proteins"/>
    <property type="match status" value="1"/>
</dbReference>
<dbReference type="SUPFAM" id="SSF47781">
    <property type="entry name" value="RuvA domain 2-like"/>
    <property type="match status" value="1"/>
</dbReference>